<keyword id="KW-0963">Cytoplasm</keyword>
<keyword id="KW-0378">Hydrolase</keyword>
<keyword id="KW-0540">Nuclease</keyword>
<keyword id="KW-1185">Reference proteome</keyword>
<keyword id="KW-0690">Ribosome biogenesis</keyword>
<reference key="1">
    <citation type="journal article" date="2006" name="PLoS Genet.">
        <title>Comparative genomics of emerging human ehrlichiosis agents.</title>
        <authorList>
            <person name="Dunning Hotopp J.C."/>
            <person name="Lin M."/>
            <person name="Madupu R."/>
            <person name="Crabtree J."/>
            <person name="Angiuoli S.V."/>
            <person name="Eisen J.A."/>
            <person name="Seshadri R."/>
            <person name="Ren Q."/>
            <person name="Wu M."/>
            <person name="Utterback T.R."/>
            <person name="Smith S."/>
            <person name="Lewis M."/>
            <person name="Khouri H."/>
            <person name="Zhang C."/>
            <person name="Niu H."/>
            <person name="Lin Q."/>
            <person name="Ohashi N."/>
            <person name="Zhi N."/>
            <person name="Nelson W.C."/>
            <person name="Brinkac L.M."/>
            <person name="Dodson R.J."/>
            <person name="Rosovitz M.J."/>
            <person name="Sundaram J.P."/>
            <person name="Daugherty S.C."/>
            <person name="Davidsen T."/>
            <person name="Durkin A.S."/>
            <person name="Gwinn M.L."/>
            <person name="Haft D.H."/>
            <person name="Selengut J.D."/>
            <person name="Sullivan S.A."/>
            <person name="Zafar N."/>
            <person name="Zhou L."/>
            <person name="Benahmed F."/>
            <person name="Forberger H."/>
            <person name="Halpin R."/>
            <person name="Mulligan S."/>
            <person name="Robinson J."/>
            <person name="White O."/>
            <person name="Rikihisa Y."/>
            <person name="Tettelin H."/>
        </authorList>
    </citation>
    <scope>NUCLEOTIDE SEQUENCE [LARGE SCALE GENOMIC DNA]</scope>
    <source>
        <strain>ATCC CRL-10679 / Arkansas</strain>
    </source>
</reference>
<evidence type="ECO:0000255" key="1">
    <source>
        <dbReference type="HAMAP-Rule" id="MF_00651"/>
    </source>
</evidence>
<name>YQGF_EHRCR</name>
<dbReference type="EC" id="3.1.-.-" evidence="1"/>
<dbReference type="EMBL" id="CP000236">
    <property type="protein sequence ID" value="ABD45383.1"/>
    <property type="molecule type" value="Genomic_DNA"/>
</dbReference>
<dbReference type="RefSeq" id="WP_011452617.1">
    <property type="nucleotide sequence ID" value="NC_007799.1"/>
</dbReference>
<dbReference type="SMR" id="Q2GH06"/>
<dbReference type="STRING" id="205920.ECH_0460"/>
<dbReference type="KEGG" id="ech:ECH_0460"/>
<dbReference type="eggNOG" id="COG0816">
    <property type="taxonomic scope" value="Bacteria"/>
</dbReference>
<dbReference type="HOGENOM" id="CLU_098240_2_2_5"/>
<dbReference type="OrthoDB" id="9796140at2"/>
<dbReference type="Proteomes" id="UP000008320">
    <property type="component" value="Chromosome"/>
</dbReference>
<dbReference type="GO" id="GO:0005829">
    <property type="term" value="C:cytosol"/>
    <property type="evidence" value="ECO:0007669"/>
    <property type="project" value="TreeGrafter"/>
</dbReference>
<dbReference type="GO" id="GO:0004518">
    <property type="term" value="F:nuclease activity"/>
    <property type="evidence" value="ECO:0007669"/>
    <property type="project" value="UniProtKB-KW"/>
</dbReference>
<dbReference type="GO" id="GO:0000967">
    <property type="term" value="P:rRNA 5'-end processing"/>
    <property type="evidence" value="ECO:0007669"/>
    <property type="project" value="UniProtKB-UniRule"/>
</dbReference>
<dbReference type="CDD" id="cd16964">
    <property type="entry name" value="YqgF"/>
    <property type="match status" value="1"/>
</dbReference>
<dbReference type="Gene3D" id="3.30.420.140">
    <property type="entry name" value="YqgF/RNase H-like domain"/>
    <property type="match status" value="1"/>
</dbReference>
<dbReference type="HAMAP" id="MF_00651">
    <property type="entry name" value="Nuclease_YqgF"/>
    <property type="match status" value="1"/>
</dbReference>
<dbReference type="InterPro" id="IPR012337">
    <property type="entry name" value="RNaseH-like_sf"/>
</dbReference>
<dbReference type="InterPro" id="IPR005227">
    <property type="entry name" value="YqgF"/>
</dbReference>
<dbReference type="InterPro" id="IPR006641">
    <property type="entry name" value="YqgF/RNaseH-like_dom"/>
</dbReference>
<dbReference type="InterPro" id="IPR037027">
    <property type="entry name" value="YqgF/RNaseH-like_dom_sf"/>
</dbReference>
<dbReference type="NCBIfam" id="TIGR00250">
    <property type="entry name" value="RNAse_H_YqgF"/>
    <property type="match status" value="1"/>
</dbReference>
<dbReference type="PANTHER" id="PTHR33317">
    <property type="entry name" value="POLYNUCLEOTIDYL TRANSFERASE, RIBONUCLEASE H-LIKE SUPERFAMILY PROTEIN"/>
    <property type="match status" value="1"/>
</dbReference>
<dbReference type="PANTHER" id="PTHR33317:SF4">
    <property type="entry name" value="POLYNUCLEOTIDYL TRANSFERASE, RIBONUCLEASE H-LIKE SUPERFAMILY PROTEIN"/>
    <property type="match status" value="1"/>
</dbReference>
<dbReference type="Pfam" id="PF03652">
    <property type="entry name" value="RuvX"/>
    <property type="match status" value="1"/>
</dbReference>
<dbReference type="SMART" id="SM00732">
    <property type="entry name" value="YqgFc"/>
    <property type="match status" value="1"/>
</dbReference>
<dbReference type="SUPFAM" id="SSF53098">
    <property type="entry name" value="Ribonuclease H-like"/>
    <property type="match status" value="1"/>
</dbReference>
<sequence length="156" mass="17860">MLYKNVDEFIKVIDKTKRIMGLDFGEKKIGIALSDRTNLIAIPYSVYVRRSSRKDLGSLYSIFVENDVGSIVIGWPLELSGVENELCQKVVMFANRIITRYKINICLHDERYSTAMATRLAKLANIKRKESQAIDDKISAVLILQQVLDIIKVYQM</sequence>
<protein>
    <recommendedName>
        <fullName evidence="1">Putative pre-16S rRNA nuclease</fullName>
        <ecNumber evidence="1">3.1.-.-</ecNumber>
    </recommendedName>
</protein>
<comment type="function">
    <text evidence="1">Could be a nuclease involved in processing of the 5'-end of pre-16S rRNA.</text>
</comment>
<comment type="subcellular location">
    <subcellularLocation>
        <location evidence="1">Cytoplasm</location>
    </subcellularLocation>
</comment>
<comment type="similarity">
    <text evidence="1">Belongs to the YqgF nuclease family.</text>
</comment>
<feature type="chain" id="PRO_0000257532" description="Putative pre-16S rRNA nuclease">
    <location>
        <begin position="1"/>
        <end position="156"/>
    </location>
</feature>
<accession>Q2GH06</accession>
<organism>
    <name type="scientific">Ehrlichia chaffeensis (strain ATCC CRL-10679 / Arkansas)</name>
    <dbReference type="NCBI Taxonomy" id="205920"/>
    <lineage>
        <taxon>Bacteria</taxon>
        <taxon>Pseudomonadati</taxon>
        <taxon>Pseudomonadota</taxon>
        <taxon>Alphaproteobacteria</taxon>
        <taxon>Rickettsiales</taxon>
        <taxon>Anaplasmataceae</taxon>
        <taxon>Ehrlichia</taxon>
    </lineage>
</organism>
<proteinExistence type="inferred from homology"/>
<gene>
    <name type="ordered locus">ECH_0460</name>
</gene>